<keyword id="KW-0963">Cytoplasm</keyword>
<keyword id="KW-0648">Protein biosynthesis</keyword>
<keyword id="KW-0663">Pyridoxal phosphate</keyword>
<keyword id="KW-0711">Selenium</keyword>
<keyword id="KW-0808">Transferase</keyword>
<organism>
    <name type="scientific">Yersinia pestis (strain Pestoides F)</name>
    <dbReference type="NCBI Taxonomy" id="386656"/>
    <lineage>
        <taxon>Bacteria</taxon>
        <taxon>Pseudomonadati</taxon>
        <taxon>Pseudomonadota</taxon>
        <taxon>Gammaproteobacteria</taxon>
        <taxon>Enterobacterales</taxon>
        <taxon>Yersiniaceae</taxon>
        <taxon>Yersinia</taxon>
    </lineage>
</organism>
<proteinExistence type="inferred from homology"/>
<comment type="function">
    <text evidence="1">Converts seryl-tRNA(Sec) to selenocysteinyl-tRNA(Sec) required for selenoprotein biosynthesis.</text>
</comment>
<comment type="catalytic activity">
    <reaction evidence="1">
        <text>L-seryl-tRNA(Sec) + selenophosphate + H(+) = L-selenocysteinyl-tRNA(Sec) + phosphate</text>
        <dbReference type="Rhea" id="RHEA:22728"/>
        <dbReference type="Rhea" id="RHEA-COMP:9742"/>
        <dbReference type="Rhea" id="RHEA-COMP:9743"/>
        <dbReference type="ChEBI" id="CHEBI:15378"/>
        <dbReference type="ChEBI" id="CHEBI:16144"/>
        <dbReference type="ChEBI" id="CHEBI:43474"/>
        <dbReference type="ChEBI" id="CHEBI:78533"/>
        <dbReference type="ChEBI" id="CHEBI:78573"/>
        <dbReference type="EC" id="2.9.1.1"/>
    </reaction>
</comment>
<comment type="cofactor">
    <cofactor evidence="1">
        <name>pyridoxal 5'-phosphate</name>
        <dbReference type="ChEBI" id="CHEBI:597326"/>
    </cofactor>
</comment>
<comment type="pathway">
    <text evidence="1">Aminoacyl-tRNA biosynthesis; selenocysteinyl-tRNA(Sec) biosynthesis; selenocysteinyl-tRNA(Sec) from L-seryl-tRNA(Sec) (bacterial route): step 1/1.</text>
</comment>
<comment type="subunit">
    <text evidence="1">Homodecamer; pentamer of dimers. Binds only one seryl-tRNA(Sec) per dimer.</text>
</comment>
<comment type="subcellular location">
    <subcellularLocation>
        <location evidence="1">Cytoplasm</location>
    </subcellularLocation>
</comment>
<comment type="similarity">
    <text evidence="1">Belongs to the SelA family.</text>
</comment>
<feature type="chain" id="PRO_1000050389" description="L-seryl-tRNA(Sec) selenium transferase">
    <location>
        <begin position="1"/>
        <end position="462"/>
    </location>
</feature>
<feature type="modified residue" description="N6-(pyridoxal phosphate)lysine" evidence="1">
    <location>
        <position position="294"/>
    </location>
</feature>
<accession>A4TGQ3</accession>
<evidence type="ECO:0000255" key="1">
    <source>
        <dbReference type="HAMAP-Rule" id="MF_00423"/>
    </source>
</evidence>
<name>SELA_YERPP</name>
<dbReference type="EC" id="2.9.1.1" evidence="1"/>
<dbReference type="EMBL" id="CP000668">
    <property type="protein sequence ID" value="ABP38466.1"/>
    <property type="molecule type" value="Genomic_DNA"/>
</dbReference>
<dbReference type="RefSeq" id="WP_002209608.1">
    <property type="nucleotide sequence ID" value="NZ_CP009715.1"/>
</dbReference>
<dbReference type="SMR" id="A4TGQ3"/>
<dbReference type="GeneID" id="57974660"/>
<dbReference type="KEGG" id="ypp:YPDSF_0039"/>
<dbReference type="PATRIC" id="fig|386656.14.peg.534"/>
<dbReference type="UniPathway" id="UPA00906">
    <property type="reaction ID" value="UER00896"/>
</dbReference>
<dbReference type="GO" id="GO:0005737">
    <property type="term" value="C:cytoplasm"/>
    <property type="evidence" value="ECO:0007669"/>
    <property type="project" value="UniProtKB-SubCell"/>
</dbReference>
<dbReference type="GO" id="GO:0004125">
    <property type="term" value="F:L-seryl-tRNA(Sec) selenium transferase activity"/>
    <property type="evidence" value="ECO:0007669"/>
    <property type="project" value="UniProtKB-UniRule"/>
</dbReference>
<dbReference type="GO" id="GO:0001717">
    <property type="term" value="P:conversion of seryl-tRNAsec to selenocys-tRNAsec"/>
    <property type="evidence" value="ECO:0007669"/>
    <property type="project" value="UniProtKB-UniRule"/>
</dbReference>
<dbReference type="GO" id="GO:0001514">
    <property type="term" value="P:selenocysteine incorporation"/>
    <property type="evidence" value="ECO:0007669"/>
    <property type="project" value="UniProtKB-UniRule"/>
</dbReference>
<dbReference type="FunFam" id="3.40.640.10:FF:000028">
    <property type="entry name" value="L-seryl-tRNA(Sec) selenium transferase"/>
    <property type="match status" value="1"/>
</dbReference>
<dbReference type="Gene3D" id="3.90.1150.180">
    <property type="match status" value="1"/>
</dbReference>
<dbReference type="Gene3D" id="3.40.640.10">
    <property type="entry name" value="Type I PLP-dependent aspartate aminotransferase-like (Major domain)"/>
    <property type="match status" value="1"/>
</dbReference>
<dbReference type="HAMAP" id="MF_00423">
    <property type="entry name" value="SelA"/>
    <property type="match status" value="1"/>
</dbReference>
<dbReference type="InterPro" id="IPR015424">
    <property type="entry name" value="PyrdxlP-dep_Trfase"/>
</dbReference>
<dbReference type="InterPro" id="IPR015421">
    <property type="entry name" value="PyrdxlP-dep_Trfase_major"/>
</dbReference>
<dbReference type="InterPro" id="IPR018319">
    <property type="entry name" value="SelA-like"/>
</dbReference>
<dbReference type="InterPro" id="IPR004534">
    <property type="entry name" value="SelA_trans"/>
</dbReference>
<dbReference type="InterPro" id="IPR025862">
    <property type="entry name" value="SelA_trans_N_dom"/>
</dbReference>
<dbReference type="NCBIfam" id="TIGR00474">
    <property type="entry name" value="selA"/>
    <property type="match status" value="1"/>
</dbReference>
<dbReference type="PANTHER" id="PTHR32328">
    <property type="entry name" value="L-SERYL-TRNA(SEC) SELENIUM TRANSFERASE"/>
    <property type="match status" value="1"/>
</dbReference>
<dbReference type="PANTHER" id="PTHR32328:SF0">
    <property type="entry name" value="L-SERYL-TRNA(SEC) SELENIUM TRANSFERASE"/>
    <property type="match status" value="1"/>
</dbReference>
<dbReference type="Pfam" id="PF12390">
    <property type="entry name" value="Se-cys_synth_N"/>
    <property type="match status" value="1"/>
</dbReference>
<dbReference type="Pfam" id="PF03841">
    <property type="entry name" value="SelA"/>
    <property type="match status" value="1"/>
</dbReference>
<dbReference type="SUPFAM" id="SSF53383">
    <property type="entry name" value="PLP-dependent transferases"/>
    <property type="match status" value="1"/>
</dbReference>
<reference key="1">
    <citation type="submission" date="2007-02" db="EMBL/GenBank/DDBJ databases">
        <title>Complete sequence of chromosome of Yersinia pestis Pestoides F.</title>
        <authorList>
            <consortium name="US DOE Joint Genome Institute"/>
            <person name="Copeland A."/>
            <person name="Lucas S."/>
            <person name="Lapidus A."/>
            <person name="Barry K."/>
            <person name="Detter J.C."/>
            <person name="Glavina del Rio T."/>
            <person name="Hammon N."/>
            <person name="Israni S."/>
            <person name="Dalin E."/>
            <person name="Tice H."/>
            <person name="Pitluck S."/>
            <person name="Di Bartolo G."/>
            <person name="Chain P."/>
            <person name="Malfatti S."/>
            <person name="Shin M."/>
            <person name="Vergez L."/>
            <person name="Schmutz J."/>
            <person name="Larimer F."/>
            <person name="Land M."/>
            <person name="Hauser L."/>
            <person name="Worsham P."/>
            <person name="Chu M."/>
            <person name="Bearden S."/>
            <person name="Garcia E."/>
            <person name="Richardson P."/>
        </authorList>
    </citation>
    <scope>NUCLEOTIDE SEQUENCE [LARGE SCALE GENOMIC DNA]</scope>
    <source>
        <strain>Pestoides F</strain>
    </source>
</reference>
<sequence length="462" mass="50209">MSAEPHPLYRQLPAIDRLLNEPEMAPLLAEYGPVLLADTLRQLQAEAREYIGQFHTLADWCADWPAALRQRLNQRQPALKPVFNLTGTVLHTNLGRAPLAESAIAAVTDAMRSAVTLEYSLEGAGRGHRDRAVADLLCALTGAEDACIVNNNAAAVFLLLTVMAAGKQVVVSRGELVEIGGAFRIPDVMRQAGCELVEVGTTNRTHLKDYRQAINENTGLLMKVHTSNYSIEGFTAAVSEQQLAALGQECSIPTATDLGSGSLVDMTRYGLPAEPMPQQLIAAGVDLVTFSGDKLLGGPQAGIILGKKQWIERLQQHPLKRALRADKMTLAALDATLRLYQQPDRLVEQLPSLRLLTRPASEIAACAQRLLAPLIACYGTDFTLDIESCWSQIGSGSLPVDRLPSWALTFTPKDGRGSTLEALTARWRTLTKPVIGRVADGRLWLDLRCLEDEAALLRELAS</sequence>
<gene>
    <name evidence="1" type="primary">selA</name>
    <name type="ordered locus">YPDSF_0039</name>
</gene>
<protein>
    <recommendedName>
        <fullName evidence="1">L-seryl-tRNA(Sec) selenium transferase</fullName>
        <ecNumber evidence="1">2.9.1.1</ecNumber>
    </recommendedName>
    <alternativeName>
        <fullName evidence="1">Selenocysteine synthase</fullName>
        <shortName evidence="1">Sec synthase</shortName>
    </alternativeName>
    <alternativeName>
        <fullName evidence="1">Selenocysteinyl-tRNA(Sec) synthase</fullName>
    </alternativeName>
</protein>